<comment type="function">
    <text evidence="1 5">E3 ubiquitin-protein ligase that mediates ubiquitination oF target proteins (By similarity). Depending on the associated E2 ligase, mediates 'Lys-27'-, 'Lys-29'-, 'Lys-48'- and/or 'Lys-63'-linked polyubiquitination of substrates (PubMed:23418353). Part of a BAG6-dependent quality control process ensuring that proteins of the secretory pathway that are mislocalized to the cytosol are degraded by the proteasome (By similarity). Probably acts by providing the ubiquitin ligase activity associated with the BAG6 complex and be responsible for ubiquitination of the hydrophobic mislocalized proteins and their targeting to the proteasome (By similarity). May also play a role in the endosomal recycling of IGF2R, the cation-independent mannose-6-phosphate receptor (By similarity). May play a role in the endosomal sorting and degradation of several membrane receptors including EGFR, FLT3, MET and CXCR4, by mediating their ubiquitination (PubMed:23418353). By ubiquitinating CDKN1A/p21 and targeting it for degradation, may also promote cell proliferation (By similarity). May monoubiquitinate AICDA (By similarity). Acts as a regulator of DNA repair by mediating 'Lys-27'- and 'Lys-29'-linked polyubiquitination of MRE11, thereby promoting the exonuclease activity of MRE11 (By similarity).</text>
</comment>
<comment type="catalytic activity">
    <reaction evidence="5">
        <text>S-ubiquitinyl-[E2 ubiquitin-conjugating enzyme]-L-cysteine + [acceptor protein]-L-lysine = [E2 ubiquitin-conjugating enzyme]-L-cysteine + N(6)-ubiquitinyl-[acceptor protein]-L-lysine.</text>
        <dbReference type="EC" id="2.3.2.27"/>
    </reaction>
</comment>
<comment type="pathway">
    <text evidence="5">Protein modification; protein ubiquitination.</text>
</comment>
<comment type="subunit">
    <text evidence="1 5">Interacts with CCDC50, EGFR, FLT3 and SCAMP3 (PubMed:23418353). Interacts with BAG6 (via ubiquitin-like domain); required for BAG6-dependent ubiquitination of proteins mislocalized to the cytosol (By similarity). Interacts with CDKN1A (By similarity). Interacts with AICDA (By similarity).</text>
</comment>
<comment type="subcellular location">
    <subcellularLocation>
        <location evidence="1">Cytoplasm</location>
    </subcellularLocation>
    <subcellularLocation>
        <location evidence="1">Nucleus</location>
    </subcellularLocation>
</comment>
<comment type="tissue specificity">
    <text evidence="4">Detected in B-cells (at protein level).</text>
</comment>
<comment type="induction">
    <text evidence="4">Up-regulated in B-cells that undergo class-switch recombination (at protein level).</text>
</comment>
<comment type="domain">
    <text evidence="1">The C4-type zinc finger is required for interaction with BAG6.</text>
</comment>
<comment type="PTM">
    <text evidence="1 7">Ubiquitinated. May undergo autoubiquitination.</text>
</comment>
<comment type="disruption phenotype">
    <text evidence="6">Partial embryonic lethality (PubMed:36563124). Surviving mice do not show any visible phenotype but show increased sensitivity to DNA damage (PubMed:36563124).</text>
</comment>
<keyword id="KW-0002">3D-structure</keyword>
<keyword id="KW-0007">Acetylation</keyword>
<keyword id="KW-0963">Cytoplasm</keyword>
<keyword id="KW-0479">Metal-binding</keyword>
<keyword id="KW-0539">Nucleus</keyword>
<keyword id="KW-0597">Phosphoprotein</keyword>
<keyword id="KW-1185">Reference proteome</keyword>
<keyword id="KW-0808">Transferase</keyword>
<keyword id="KW-0832">Ubl conjugation</keyword>
<keyword id="KW-0833">Ubl conjugation pathway</keyword>
<keyword id="KW-0862">Zinc</keyword>
<keyword id="KW-0863">Zinc-finger</keyword>
<gene>
    <name evidence="9" type="primary">Rnf126</name>
</gene>
<reference key="1">
    <citation type="journal article" date="2004" name="Genome Res.">
        <title>The status, quality, and expansion of the NIH full-length cDNA project: the Mammalian Gene Collection (MGC).</title>
        <authorList>
            <consortium name="The MGC Project Team"/>
        </authorList>
    </citation>
    <scope>NUCLEOTIDE SEQUENCE [LARGE SCALE MRNA]</scope>
    <source>
        <strain>FVB/N</strain>
        <tissue>Mammary tumor</tissue>
    </source>
</reference>
<reference key="2">
    <citation type="journal article" date="2010" name="Cell">
        <title>A tissue-specific atlas of mouse protein phosphorylation and expression.</title>
        <authorList>
            <person name="Huttlin E.L."/>
            <person name="Jedrychowski M.P."/>
            <person name="Elias J.E."/>
            <person name="Goswami T."/>
            <person name="Rad R."/>
            <person name="Beausoleil S.A."/>
            <person name="Villen J."/>
            <person name="Haas W."/>
            <person name="Sowa M.E."/>
            <person name="Gygi S.P."/>
        </authorList>
    </citation>
    <scope>IDENTIFICATION BY MASS SPECTROMETRY [LARGE SCALE ANALYSIS]</scope>
    <source>
        <tissue>Spleen</tissue>
        <tissue>Testis</tissue>
    </source>
</reference>
<reference key="3">
    <citation type="journal article" date="2013" name="J. Cell Sci.">
        <title>The E3 ubiquitin ligases RNF126 and Rabring7 regulate endosomal sorting of the epidermal growth factor receptor.</title>
        <authorList>
            <person name="Smith C.J."/>
            <person name="Berry D.M."/>
            <person name="McGlade C.J."/>
        </authorList>
    </citation>
    <scope>FUNCTION</scope>
    <scope>PATHWAY</scope>
    <scope>CATALYTIC ACTIVITY</scope>
    <scope>MUTAGENESIS OF CYS-13; CYS-16 AND CYS-231</scope>
    <scope>INTERACTION WITH CCDC50; EGFR; FLT3 AND SCAMP3</scope>
</reference>
<reference key="4">
    <citation type="journal article" date="2013" name="Proc. Natl. Acad. Sci. U.S.A.">
        <title>Solubility-based genetic screen identifies RING finger protein 126 as an E3 ligase for activation-induced cytidine deaminase.</title>
        <authorList>
            <person name="Delker R.K."/>
            <person name="Zhou Y."/>
            <person name="Strikoudis A."/>
            <person name="Stebbins C.E."/>
            <person name="Papavasiliou F.N."/>
        </authorList>
    </citation>
    <scope>TISSUE SPECIFICITY</scope>
    <scope>INDUCTION</scope>
</reference>
<reference key="5">
    <citation type="journal article" date="2023" name="Adv. Sci.">
        <title>RNF126-mediated MRE11 ubiquitination activates the DNA damage response and confers resistance of triple-negative breast cancer to radiotherapy.</title>
        <authorList>
            <person name="Liu W."/>
            <person name="Zheng M."/>
            <person name="Zhang R."/>
            <person name="Jiang Q."/>
            <person name="Du G."/>
            <person name="Wu Y."/>
            <person name="Yang C."/>
            <person name="Li F."/>
            <person name="Li W."/>
            <person name="Wang L."/>
            <person name="Wu J."/>
            <person name="Shi L."/>
            <person name="Li W."/>
            <person name="Zhang K."/>
            <person name="Zhou Z."/>
            <person name="Liu R."/>
            <person name="Gao Y."/>
            <person name="Huang X."/>
            <person name="Fan S."/>
            <person name="Zhi X."/>
            <person name="Jiang D."/>
            <person name="Chen C."/>
        </authorList>
    </citation>
    <scope>DISRUPTION PHENOTYPE</scope>
</reference>
<reference key="6">
    <citation type="submission" date="2008-02" db="PDB data bank">
        <title>Solution structure of the zinc finger, C3HC4 type (RING finger) domain of RING finger protein 126.</title>
        <authorList>
            <consortium name="RIKEN structural genomics initiative (RSGI)"/>
        </authorList>
    </citation>
    <scope>STRUCTURE BY NMR OF 221-291</scope>
</reference>
<accession>Q91YL2</accession>
<name>RN126_MOUSE</name>
<dbReference type="EC" id="2.3.2.27" evidence="5"/>
<dbReference type="EMBL" id="BC016543">
    <property type="protein sequence ID" value="AAH16543.1"/>
    <property type="molecule type" value="mRNA"/>
</dbReference>
<dbReference type="CCDS" id="CCDS23989.1"/>
<dbReference type="RefSeq" id="NP_653111.1">
    <property type="nucleotide sequence ID" value="NM_144528.3"/>
</dbReference>
<dbReference type="PDB" id="2ECT">
    <property type="method" value="NMR"/>
    <property type="chains" value="A=221-291"/>
</dbReference>
<dbReference type="PDBsum" id="2ECT"/>
<dbReference type="BMRB" id="Q91YL2"/>
<dbReference type="SMR" id="Q91YL2"/>
<dbReference type="BioGRID" id="213968">
    <property type="interactions" value="5"/>
</dbReference>
<dbReference type="FunCoup" id="Q91YL2">
    <property type="interactions" value="3165"/>
</dbReference>
<dbReference type="IntAct" id="Q91YL2">
    <property type="interactions" value="1"/>
</dbReference>
<dbReference type="MINT" id="Q91YL2"/>
<dbReference type="STRING" id="10090.ENSMUSP00000039486"/>
<dbReference type="GlyGen" id="Q91YL2">
    <property type="glycosylation" value="2 sites, 2 N-linked glycans (2 sites)"/>
</dbReference>
<dbReference type="iPTMnet" id="Q91YL2"/>
<dbReference type="PhosphoSitePlus" id="Q91YL2"/>
<dbReference type="SwissPalm" id="Q91YL2"/>
<dbReference type="PaxDb" id="10090-ENSMUSP00000039486"/>
<dbReference type="ProteomicsDB" id="301610"/>
<dbReference type="Pumba" id="Q91YL2"/>
<dbReference type="Antibodypedia" id="22343">
    <property type="antibodies" value="152 antibodies from 23 providers"/>
</dbReference>
<dbReference type="DNASU" id="70294"/>
<dbReference type="Ensembl" id="ENSMUST00000047203.9">
    <property type="protein sequence ID" value="ENSMUSP00000039486.9"/>
    <property type="gene ID" value="ENSMUSG00000035890.10"/>
</dbReference>
<dbReference type="GeneID" id="70294"/>
<dbReference type="KEGG" id="mmu:70294"/>
<dbReference type="UCSC" id="uc007fzr.3">
    <property type="organism name" value="mouse"/>
</dbReference>
<dbReference type="AGR" id="MGI:1917544"/>
<dbReference type="CTD" id="55658"/>
<dbReference type="MGI" id="MGI:1917544">
    <property type="gene designation" value="Rnf126"/>
</dbReference>
<dbReference type="VEuPathDB" id="HostDB:ENSMUSG00000035890"/>
<dbReference type="eggNOG" id="KOG0800">
    <property type="taxonomic scope" value="Eukaryota"/>
</dbReference>
<dbReference type="GeneTree" id="ENSGT00940000157113"/>
<dbReference type="HOGENOM" id="CLU_034892_0_0_1"/>
<dbReference type="InParanoid" id="Q91YL2"/>
<dbReference type="OMA" id="PNSDFTC"/>
<dbReference type="OrthoDB" id="8062037at2759"/>
<dbReference type="PhylomeDB" id="Q91YL2"/>
<dbReference type="TreeFam" id="TF317985"/>
<dbReference type="Reactome" id="R-MMU-983168">
    <property type="pathway name" value="Antigen processing: Ubiquitination &amp; Proteasome degradation"/>
</dbReference>
<dbReference type="UniPathway" id="UPA00143"/>
<dbReference type="BioGRID-ORCS" id="70294">
    <property type="hits" value="10 hits in 79 CRISPR screens"/>
</dbReference>
<dbReference type="ChiTaRS" id="Rnf126">
    <property type="organism name" value="mouse"/>
</dbReference>
<dbReference type="EvolutionaryTrace" id="Q91YL2"/>
<dbReference type="PRO" id="PR:Q91YL2"/>
<dbReference type="Proteomes" id="UP000000589">
    <property type="component" value="Chromosome 10"/>
</dbReference>
<dbReference type="RNAct" id="Q91YL2">
    <property type="molecule type" value="protein"/>
</dbReference>
<dbReference type="Bgee" id="ENSMUSG00000035890">
    <property type="expression patterns" value="Expressed in dorsal pancreas and 247 other cell types or tissues"/>
</dbReference>
<dbReference type="ExpressionAtlas" id="Q91YL2">
    <property type="expression patterns" value="baseline and differential"/>
</dbReference>
<dbReference type="GO" id="GO:0005737">
    <property type="term" value="C:cytoplasm"/>
    <property type="evidence" value="ECO:0000250"/>
    <property type="project" value="UniProtKB"/>
</dbReference>
<dbReference type="GO" id="GO:0005829">
    <property type="term" value="C:cytosol"/>
    <property type="evidence" value="ECO:0007669"/>
    <property type="project" value="Ensembl"/>
</dbReference>
<dbReference type="GO" id="GO:0005654">
    <property type="term" value="C:nucleoplasm"/>
    <property type="evidence" value="ECO:0007669"/>
    <property type="project" value="Ensembl"/>
</dbReference>
<dbReference type="GO" id="GO:0005634">
    <property type="term" value="C:nucleus"/>
    <property type="evidence" value="ECO:0000250"/>
    <property type="project" value="UniProtKB"/>
</dbReference>
<dbReference type="GO" id="GO:0005154">
    <property type="term" value="F:epidermal growth factor receptor binding"/>
    <property type="evidence" value="ECO:0000353"/>
    <property type="project" value="UniProtKB"/>
</dbReference>
<dbReference type="GO" id="GO:0061630">
    <property type="term" value="F:ubiquitin protein ligase activity"/>
    <property type="evidence" value="ECO:0000314"/>
    <property type="project" value="UniProtKB"/>
</dbReference>
<dbReference type="GO" id="GO:0008270">
    <property type="term" value="F:zinc ion binding"/>
    <property type="evidence" value="ECO:0007669"/>
    <property type="project" value="UniProtKB-KW"/>
</dbReference>
<dbReference type="GO" id="GO:0071629">
    <property type="term" value="P:cytoplasm protein quality control by the ubiquitin-proteasome system"/>
    <property type="evidence" value="ECO:0000250"/>
    <property type="project" value="UniProtKB"/>
</dbReference>
<dbReference type="GO" id="GO:0042059">
    <property type="term" value="P:negative regulation of epidermal growth factor receptor signaling pathway"/>
    <property type="evidence" value="ECO:0000250"/>
    <property type="project" value="UniProtKB"/>
</dbReference>
<dbReference type="GO" id="GO:1905168">
    <property type="term" value="P:positive regulation of double-strand break repair via homologous recombination"/>
    <property type="evidence" value="ECO:0000250"/>
    <property type="project" value="UniProtKB"/>
</dbReference>
<dbReference type="GO" id="GO:0043161">
    <property type="term" value="P:proteasome-mediated ubiquitin-dependent protein catabolic process"/>
    <property type="evidence" value="ECO:0000250"/>
    <property type="project" value="UniProtKB"/>
</dbReference>
<dbReference type="GO" id="GO:0044314">
    <property type="term" value="P:protein K27-linked ubiquitination"/>
    <property type="evidence" value="ECO:0000250"/>
    <property type="project" value="UniProtKB"/>
</dbReference>
<dbReference type="GO" id="GO:0035519">
    <property type="term" value="P:protein K29-linked ubiquitination"/>
    <property type="evidence" value="ECO:0000250"/>
    <property type="project" value="UniProtKB"/>
</dbReference>
<dbReference type="GO" id="GO:0070936">
    <property type="term" value="P:protein K48-linked ubiquitination"/>
    <property type="evidence" value="ECO:0000314"/>
    <property type="project" value="UniProtKB"/>
</dbReference>
<dbReference type="GO" id="GO:0070534">
    <property type="term" value="P:protein K63-linked ubiquitination"/>
    <property type="evidence" value="ECO:0000314"/>
    <property type="project" value="UniProtKB"/>
</dbReference>
<dbReference type="GO" id="GO:0006513">
    <property type="term" value="P:protein monoubiquitination"/>
    <property type="evidence" value="ECO:0000250"/>
    <property type="project" value="UniProtKB"/>
</dbReference>
<dbReference type="GO" id="GO:0042127">
    <property type="term" value="P:regulation of cell population proliferation"/>
    <property type="evidence" value="ECO:0000250"/>
    <property type="project" value="UniProtKB"/>
</dbReference>
<dbReference type="GO" id="GO:0042147">
    <property type="term" value="P:retrograde transport, endosome to Golgi"/>
    <property type="evidence" value="ECO:0000250"/>
    <property type="project" value="UniProtKB"/>
</dbReference>
<dbReference type="GO" id="GO:0006511">
    <property type="term" value="P:ubiquitin-dependent protein catabolic process"/>
    <property type="evidence" value="ECO:0000250"/>
    <property type="project" value="UniProtKB"/>
</dbReference>
<dbReference type="GO" id="GO:0043162">
    <property type="term" value="P:ubiquitin-dependent protein catabolic process via the multivesicular body sorting pathway"/>
    <property type="evidence" value="ECO:0000250"/>
    <property type="project" value="UniProtKB"/>
</dbReference>
<dbReference type="CDD" id="cd16801">
    <property type="entry name" value="RING-H2_RNF126"/>
    <property type="match status" value="1"/>
</dbReference>
<dbReference type="FunFam" id="3.30.40.10:FF:000253">
    <property type="entry name" value="E3 ubiquitin-protein ligase RNF126"/>
    <property type="match status" value="1"/>
</dbReference>
<dbReference type="Gene3D" id="3.30.40.10">
    <property type="entry name" value="Zinc/RING finger domain, C3HC4 (zinc finger)"/>
    <property type="match status" value="1"/>
</dbReference>
<dbReference type="InterPro" id="IPR039525">
    <property type="entry name" value="RNF126-like_zinc-ribbon"/>
</dbReference>
<dbReference type="InterPro" id="IPR039571">
    <property type="entry name" value="RNF126_RING-H2"/>
</dbReference>
<dbReference type="InterPro" id="IPR001841">
    <property type="entry name" value="Znf_RING"/>
</dbReference>
<dbReference type="InterPro" id="IPR013083">
    <property type="entry name" value="Znf_RING/FYVE/PHD"/>
</dbReference>
<dbReference type="PANTHER" id="PTHR15710">
    <property type="entry name" value="E3 UBIQUITIN-PROTEIN LIGASE PRAJA"/>
    <property type="match status" value="1"/>
</dbReference>
<dbReference type="PANTHER" id="PTHR15710:SF21">
    <property type="entry name" value="E3 UBIQUITIN-PROTEIN LIGASE RNF126"/>
    <property type="match status" value="1"/>
</dbReference>
<dbReference type="Pfam" id="PF13639">
    <property type="entry name" value="zf-RING_2"/>
    <property type="match status" value="1"/>
</dbReference>
<dbReference type="Pfam" id="PF14369">
    <property type="entry name" value="Zn_ribbon_19"/>
    <property type="match status" value="1"/>
</dbReference>
<dbReference type="SMART" id="SM00184">
    <property type="entry name" value="RING"/>
    <property type="match status" value="1"/>
</dbReference>
<dbReference type="SUPFAM" id="SSF57850">
    <property type="entry name" value="RING/U-box"/>
    <property type="match status" value="1"/>
</dbReference>
<dbReference type="PROSITE" id="PS50089">
    <property type="entry name" value="ZF_RING_2"/>
    <property type="match status" value="1"/>
</dbReference>
<sequence length="313" mass="34081">MAEASPQPGRYFCHCCSVEIVPRLPDYICPRCESGFIEELPEETRNTENGSAPSTAPTDQNRQPFENVDQHLFTLPQGYSQFAFGIFDDSFEIPTFPPGAQADDGRDPESRREREHQSRHRYGARQPRARLTARRATGRHEGVPTLEGIIQQLVNGIISPAAVPSLGLGPWGVLHSNPMDYAWGANGLDTIITQLLNQFENTGPPPADKEKIQALPTVPVTEEHVGSGLECPVCKEDYALGESVRQLPCNHLFHDSCIVPWLEQHDSCPVCRKSLTGQNTATNPPGLTGVGFSSSSSSSSSSSPSNENATSNS</sequence>
<feature type="initiator methionine" description="Removed" evidence="1">
    <location>
        <position position="1"/>
    </location>
</feature>
<feature type="chain" id="PRO_0000056094" description="E3 ubiquitin-protein ligase RNF126">
    <location>
        <begin position="2"/>
        <end position="313"/>
    </location>
</feature>
<feature type="zinc finger region" description="C4-type" evidence="1">
    <location>
        <begin position="13"/>
        <end position="32"/>
    </location>
</feature>
<feature type="zinc finger region" description="RING-type" evidence="2">
    <location>
        <begin position="231"/>
        <end position="272"/>
    </location>
</feature>
<feature type="region of interest" description="Required for interaction with BAG6" evidence="1">
    <location>
        <begin position="5"/>
        <end position="100"/>
    </location>
</feature>
<feature type="region of interest" description="Disordered" evidence="3">
    <location>
        <begin position="42"/>
        <end position="63"/>
    </location>
</feature>
<feature type="region of interest" description="Disordered" evidence="3">
    <location>
        <begin position="95"/>
        <end position="128"/>
    </location>
</feature>
<feature type="region of interest" description="Sufficient for interaction with AICDA" evidence="1">
    <location>
        <begin position="202"/>
        <end position="306"/>
    </location>
</feature>
<feature type="region of interest" description="Disordered" evidence="3">
    <location>
        <begin position="279"/>
        <end position="313"/>
    </location>
</feature>
<feature type="compositionally biased region" description="Polar residues" evidence="3">
    <location>
        <begin position="47"/>
        <end position="63"/>
    </location>
</feature>
<feature type="compositionally biased region" description="Basic and acidic residues" evidence="3">
    <location>
        <begin position="103"/>
        <end position="116"/>
    </location>
</feature>
<feature type="compositionally biased region" description="Basic residues" evidence="3">
    <location>
        <begin position="117"/>
        <end position="128"/>
    </location>
</feature>
<feature type="compositionally biased region" description="Low complexity" evidence="3">
    <location>
        <begin position="293"/>
        <end position="313"/>
    </location>
</feature>
<feature type="binding site" evidence="1">
    <location>
        <position position="13"/>
    </location>
    <ligand>
        <name>Zn(2+)</name>
        <dbReference type="ChEBI" id="CHEBI:29105"/>
    </ligand>
</feature>
<feature type="binding site" evidence="1">
    <location>
        <position position="16"/>
    </location>
    <ligand>
        <name>Zn(2+)</name>
        <dbReference type="ChEBI" id="CHEBI:29105"/>
    </ligand>
</feature>
<feature type="binding site" evidence="1">
    <location>
        <position position="29"/>
    </location>
    <ligand>
        <name>Zn(2+)</name>
        <dbReference type="ChEBI" id="CHEBI:29105"/>
    </ligand>
</feature>
<feature type="binding site" evidence="1">
    <location>
        <position position="32"/>
    </location>
    <ligand>
        <name>Zn(2+)</name>
        <dbReference type="ChEBI" id="CHEBI:29105"/>
    </ligand>
</feature>
<feature type="modified residue" description="N-acetylalanine" evidence="1">
    <location>
        <position position="2"/>
    </location>
</feature>
<feature type="modified residue" description="Phosphoserine" evidence="1">
    <location>
        <position position="5"/>
    </location>
</feature>
<feature type="mutagenesis site" description="Loss of interaction with EGFR and FLT3. No effect on E3 ubiquitin protein ligase activity but alters specificity for 'Lys-48'-linked chains; when associated with A-16." evidence="5">
    <original>C</original>
    <variation>A</variation>
    <location>
        <position position="13"/>
    </location>
</feature>
<feature type="mutagenesis site" description="Loss of interaction with EGFR and FLT3. No effect on E3 ubiquitin protein ligase activity but alters specificity for 'Lys-48'-linked chains; when associated with A-13." evidence="5">
    <original>C</original>
    <variation>A</variation>
    <location>
        <position position="16"/>
    </location>
</feature>
<feature type="mutagenesis site" description="Loss of E3 ubiquitin protein ligase activity." evidence="5">
    <original>C</original>
    <variation>A</variation>
    <location>
        <position position="231"/>
    </location>
</feature>
<feature type="strand" evidence="10">
    <location>
        <begin position="225"/>
        <end position="228"/>
    </location>
</feature>
<feature type="turn" evidence="10">
    <location>
        <begin position="232"/>
        <end position="235"/>
    </location>
</feature>
<feature type="strand" evidence="10">
    <location>
        <begin position="244"/>
        <end position="246"/>
    </location>
</feature>
<feature type="strand" evidence="10">
    <location>
        <begin position="252"/>
        <end position="254"/>
    </location>
</feature>
<feature type="turn" evidence="10">
    <location>
        <begin position="255"/>
        <end position="257"/>
    </location>
</feature>
<feature type="helix" evidence="10">
    <location>
        <begin position="259"/>
        <end position="262"/>
    </location>
</feature>
<feature type="turn" evidence="10">
    <location>
        <begin position="269"/>
        <end position="271"/>
    </location>
</feature>
<evidence type="ECO:0000250" key="1">
    <source>
        <dbReference type="UniProtKB" id="Q9BV68"/>
    </source>
</evidence>
<evidence type="ECO:0000255" key="2">
    <source>
        <dbReference type="PROSITE-ProRule" id="PRU00175"/>
    </source>
</evidence>
<evidence type="ECO:0000256" key="3">
    <source>
        <dbReference type="SAM" id="MobiDB-lite"/>
    </source>
</evidence>
<evidence type="ECO:0000269" key="4">
    <source>
    </source>
</evidence>
<evidence type="ECO:0000269" key="5">
    <source>
    </source>
</evidence>
<evidence type="ECO:0000269" key="6">
    <source>
    </source>
</evidence>
<evidence type="ECO:0000303" key="7">
    <source>
    </source>
</evidence>
<evidence type="ECO:0000305" key="8"/>
<evidence type="ECO:0000312" key="9">
    <source>
        <dbReference type="MGI" id="MGI:1917544"/>
    </source>
</evidence>
<evidence type="ECO:0007829" key="10">
    <source>
        <dbReference type="PDB" id="2ECT"/>
    </source>
</evidence>
<proteinExistence type="evidence at protein level"/>
<organism>
    <name type="scientific">Mus musculus</name>
    <name type="common">Mouse</name>
    <dbReference type="NCBI Taxonomy" id="10090"/>
    <lineage>
        <taxon>Eukaryota</taxon>
        <taxon>Metazoa</taxon>
        <taxon>Chordata</taxon>
        <taxon>Craniata</taxon>
        <taxon>Vertebrata</taxon>
        <taxon>Euteleostomi</taxon>
        <taxon>Mammalia</taxon>
        <taxon>Eutheria</taxon>
        <taxon>Euarchontoglires</taxon>
        <taxon>Glires</taxon>
        <taxon>Rodentia</taxon>
        <taxon>Myomorpha</taxon>
        <taxon>Muroidea</taxon>
        <taxon>Muridae</taxon>
        <taxon>Murinae</taxon>
        <taxon>Mus</taxon>
        <taxon>Mus</taxon>
    </lineage>
</organism>
<protein>
    <recommendedName>
        <fullName evidence="8">E3 ubiquitin-protein ligase RNF126</fullName>
        <ecNumber evidence="5">2.3.2.27</ecNumber>
    </recommendedName>
    <alternativeName>
        <fullName evidence="9">RING finger protein 126</fullName>
    </alternativeName>
</protein>